<evidence type="ECO:0000255" key="1">
    <source>
        <dbReference type="HAMAP-Rule" id="MF_01310"/>
    </source>
</evidence>
<evidence type="ECO:0000305" key="2"/>
<gene>
    <name evidence="1" type="primary">rpsK</name>
    <name type="ordered locus">BURPS1106A_3780</name>
</gene>
<comment type="function">
    <text evidence="1">Located on the platform of the 30S subunit, it bridges several disparate RNA helices of the 16S rRNA. Forms part of the Shine-Dalgarno cleft in the 70S ribosome.</text>
</comment>
<comment type="subunit">
    <text evidence="1">Part of the 30S ribosomal subunit. Interacts with proteins S7 and S18. Binds to IF-3.</text>
</comment>
<comment type="similarity">
    <text evidence="1">Belongs to the universal ribosomal protein uS11 family.</text>
</comment>
<sequence length="133" mass="14118">MAKASNTAAQRVRKKVKKNVAEGVVHVHASFNNTIITITDRQGNALAWATSGGQGFKGSRKSTPFAAQVAAESAGRVAMEYGVKNLEVRIKGPGPGRESAVRALHGLGIKITAISDVTPIPHNGCRPPKRRRI</sequence>
<proteinExistence type="inferred from homology"/>
<name>RS11_BURP0</name>
<dbReference type="EMBL" id="CP000572">
    <property type="protein sequence ID" value="ABN92377.1"/>
    <property type="molecule type" value="Genomic_DNA"/>
</dbReference>
<dbReference type="RefSeq" id="WP_004197937.1">
    <property type="nucleotide sequence ID" value="NC_009076.1"/>
</dbReference>
<dbReference type="SMR" id="A3P089"/>
<dbReference type="GeneID" id="98107136"/>
<dbReference type="KEGG" id="bpl:BURPS1106A_3780"/>
<dbReference type="HOGENOM" id="CLU_072439_5_0_4"/>
<dbReference type="Proteomes" id="UP000006738">
    <property type="component" value="Chromosome I"/>
</dbReference>
<dbReference type="GO" id="GO:1990904">
    <property type="term" value="C:ribonucleoprotein complex"/>
    <property type="evidence" value="ECO:0007669"/>
    <property type="project" value="UniProtKB-KW"/>
</dbReference>
<dbReference type="GO" id="GO:0005840">
    <property type="term" value="C:ribosome"/>
    <property type="evidence" value="ECO:0007669"/>
    <property type="project" value="UniProtKB-KW"/>
</dbReference>
<dbReference type="GO" id="GO:0019843">
    <property type="term" value="F:rRNA binding"/>
    <property type="evidence" value="ECO:0007669"/>
    <property type="project" value="UniProtKB-UniRule"/>
</dbReference>
<dbReference type="GO" id="GO:0003735">
    <property type="term" value="F:structural constituent of ribosome"/>
    <property type="evidence" value="ECO:0007669"/>
    <property type="project" value="InterPro"/>
</dbReference>
<dbReference type="GO" id="GO:0006412">
    <property type="term" value="P:translation"/>
    <property type="evidence" value="ECO:0007669"/>
    <property type="project" value="UniProtKB-UniRule"/>
</dbReference>
<dbReference type="FunFam" id="3.30.420.80:FF:000001">
    <property type="entry name" value="30S ribosomal protein S11"/>
    <property type="match status" value="1"/>
</dbReference>
<dbReference type="Gene3D" id="3.30.420.80">
    <property type="entry name" value="Ribosomal protein S11"/>
    <property type="match status" value="1"/>
</dbReference>
<dbReference type="HAMAP" id="MF_01310">
    <property type="entry name" value="Ribosomal_uS11"/>
    <property type="match status" value="1"/>
</dbReference>
<dbReference type="InterPro" id="IPR001971">
    <property type="entry name" value="Ribosomal_uS11"/>
</dbReference>
<dbReference type="InterPro" id="IPR019981">
    <property type="entry name" value="Ribosomal_uS11_bac-type"/>
</dbReference>
<dbReference type="InterPro" id="IPR018102">
    <property type="entry name" value="Ribosomal_uS11_CS"/>
</dbReference>
<dbReference type="InterPro" id="IPR036967">
    <property type="entry name" value="Ribosomal_uS11_sf"/>
</dbReference>
<dbReference type="NCBIfam" id="NF003698">
    <property type="entry name" value="PRK05309.1"/>
    <property type="match status" value="1"/>
</dbReference>
<dbReference type="NCBIfam" id="TIGR03632">
    <property type="entry name" value="uS11_bact"/>
    <property type="match status" value="1"/>
</dbReference>
<dbReference type="PANTHER" id="PTHR11759">
    <property type="entry name" value="40S RIBOSOMAL PROTEIN S14/30S RIBOSOMAL PROTEIN S11"/>
    <property type="match status" value="1"/>
</dbReference>
<dbReference type="Pfam" id="PF00411">
    <property type="entry name" value="Ribosomal_S11"/>
    <property type="match status" value="1"/>
</dbReference>
<dbReference type="PIRSF" id="PIRSF002131">
    <property type="entry name" value="Ribosomal_S11"/>
    <property type="match status" value="1"/>
</dbReference>
<dbReference type="SUPFAM" id="SSF53137">
    <property type="entry name" value="Translational machinery components"/>
    <property type="match status" value="1"/>
</dbReference>
<dbReference type="PROSITE" id="PS00054">
    <property type="entry name" value="RIBOSOMAL_S11"/>
    <property type="match status" value="1"/>
</dbReference>
<keyword id="KW-0687">Ribonucleoprotein</keyword>
<keyword id="KW-0689">Ribosomal protein</keyword>
<keyword id="KW-0694">RNA-binding</keyword>
<keyword id="KW-0699">rRNA-binding</keyword>
<protein>
    <recommendedName>
        <fullName evidence="1">Small ribosomal subunit protein uS11</fullName>
    </recommendedName>
    <alternativeName>
        <fullName evidence="2">30S ribosomal protein S11</fullName>
    </alternativeName>
</protein>
<feature type="chain" id="PRO_0000294729" description="Small ribosomal subunit protein uS11">
    <location>
        <begin position="1"/>
        <end position="133"/>
    </location>
</feature>
<accession>A3P089</accession>
<organism>
    <name type="scientific">Burkholderia pseudomallei (strain 1106a)</name>
    <dbReference type="NCBI Taxonomy" id="357348"/>
    <lineage>
        <taxon>Bacteria</taxon>
        <taxon>Pseudomonadati</taxon>
        <taxon>Pseudomonadota</taxon>
        <taxon>Betaproteobacteria</taxon>
        <taxon>Burkholderiales</taxon>
        <taxon>Burkholderiaceae</taxon>
        <taxon>Burkholderia</taxon>
        <taxon>pseudomallei group</taxon>
    </lineage>
</organism>
<reference key="1">
    <citation type="journal article" date="2010" name="Genome Biol. Evol.">
        <title>Continuing evolution of Burkholderia mallei through genome reduction and large-scale rearrangements.</title>
        <authorList>
            <person name="Losada L."/>
            <person name="Ronning C.M."/>
            <person name="DeShazer D."/>
            <person name="Woods D."/>
            <person name="Fedorova N."/>
            <person name="Kim H.S."/>
            <person name="Shabalina S.A."/>
            <person name="Pearson T.R."/>
            <person name="Brinkac L."/>
            <person name="Tan P."/>
            <person name="Nandi T."/>
            <person name="Crabtree J."/>
            <person name="Badger J."/>
            <person name="Beckstrom-Sternberg S."/>
            <person name="Saqib M."/>
            <person name="Schutzer S.E."/>
            <person name="Keim P."/>
            <person name="Nierman W.C."/>
        </authorList>
    </citation>
    <scope>NUCLEOTIDE SEQUENCE [LARGE SCALE GENOMIC DNA]</scope>
    <source>
        <strain>1106a</strain>
    </source>
</reference>